<organism>
    <name type="scientific">Cupriavidus pinatubonensis (strain JMP 134 / LMG 1197)</name>
    <name type="common">Cupriavidus necator (strain JMP 134)</name>
    <dbReference type="NCBI Taxonomy" id="264198"/>
    <lineage>
        <taxon>Bacteria</taxon>
        <taxon>Pseudomonadati</taxon>
        <taxon>Pseudomonadota</taxon>
        <taxon>Betaproteobacteria</taxon>
        <taxon>Burkholderiales</taxon>
        <taxon>Burkholderiaceae</taxon>
        <taxon>Cupriavidus</taxon>
    </lineage>
</organism>
<reference key="1">
    <citation type="journal article" date="2010" name="PLoS ONE">
        <title>The complete multipartite genome sequence of Cupriavidus necator JMP134, a versatile pollutant degrader.</title>
        <authorList>
            <person name="Lykidis A."/>
            <person name="Perez-Pantoja D."/>
            <person name="Ledger T."/>
            <person name="Mavromatis K."/>
            <person name="Anderson I.J."/>
            <person name="Ivanova N.N."/>
            <person name="Hooper S.D."/>
            <person name="Lapidus A."/>
            <person name="Lucas S."/>
            <person name="Gonzalez B."/>
            <person name="Kyrpides N.C."/>
        </authorList>
    </citation>
    <scope>NUCLEOTIDE SEQUENCE [LARGE SCALE GENOMIC DNA]</scope>
    <source>
        <strain>JMP134 / LMG 1197</strain>
    </source>
</reference>
<proteinExistence type="inferred from homology"/>
<accession>Q46WU8</accession>
<name>TRPD_CUPPJ</name>
<sequence length="369" mass="39419">MRLLDTATPSVSSIPIAPHATQPTETAMTITAQEALTRCIEHREIFHDEMLHLMRQIMQAQISPVMAAAILTGLRVKKETIGEISAAAQVMREFANKVEVTDRENFVDIVGTGGDGSHTFNISTASMFVAAAAGAKIAKHGNRGVSSKSGSADVLEALGVNIMLTPEQVGQCIAQTGIGFMFAPTHHPAMKNVAPIRKEMGVRTIFNILGPLTNPADAPNILMGVFHPDLVGIQVRVMQRLGAKHALVVYGKDGMDEVSLGAATLVGELKDGEVREYEIHPEDFGLSMISNRGLKVADAVESKAMLLEALGNVPGTPREIVSLNAGTALYAANVADSIEDGIRRAREAIASGAAREKLDHFVRATQQFK</sequence>
<feature type="chain" id="PRO_0000227187" description="Anthranilate phosphoribosyltransferase">
    <location>
        <begin position="1"/>
        <end position="369"/>
    </location>
</feature>
<feature type="binding site" evidence="1">
    <location>
        <position position="111"/>
    </location>
    <ligand>
        <name>5-phospho-alpha-D-ribose 1-diphosphate</name>
        <dbReference type="ChEBI" id="CHEBI:58017"/>
    </ligand>
</feature>
<feature type="binding site" evidence="1">
    <location>
        <position position="111"/>
    </location>
    <ligand>
        <name>anthranilate</name>
        <dbReference type="ChEBI" id="CHEBI:16567"/>
        <label>1</label>
    </ligand>
</feature>
<feature type="binding site" evidence="1">
    <location>
        <begin position="114"/>
        <end position="115"/>
    </location>
    <ligand>
        <name>5-phospho-alpha-D-ribose 1-diphosphate</name>
        <dbReference type="ChEBI" id="CHEBI:58017"/>
    </ligand>
</feature>
<feature type="binding site" evidence="1">
    <location>
        <position position="119"/>
    </location>
    <ligand>
        <name>5-phospho-alpha-D-ribose 1-diphosphate</name>
        <dbReference type="ChEBI" id="CHEBI:58017"/>
    </ligand>
</feature>
<feature type="binding site" evidence="1">
    <location>
        <begin position="121"/>
        <end position="124"/>
    </location>
    <ligand>
        <name>5-phospho-alpha-D-ribose 1-diphosphate</name>
        <dbReference type="ChEBI" id="CHEBI:58017"/>
    </ligand>
</feature>
<feature type="binding site" evidence="1">
    <location>
        <position position="123"/>
    </location>
    <ligand>
        <name>Mg(2+)</name>
        <dbReference type="ChEBI" id="CHEBI:18420"/>
        <label>1</label>
    </ligand>
</feature>
<feature type="binding site" evidence="1">
    <location>
        <begin position="139"/>
        <end position="147"/>
    </location>
    <ligand>
        <name>5-phospho-alpha-D-ribose 1-diphosphate</name>
        <dbReference type="ChEBI" id="CHEBI:58017"/>
    </ligand>
</feature>
<feature type="binding site" evidence="1">
    <location>
        <position position="142"/>
    </location>
    <ligand>
        <name>anthranilate</name>
        <dbReference type="ChEBI" id="CHEBI:16567"/>
        <label>1</label>
    </ligand>
</feature>
<feature type="binding site" evidence="1">
    <location>
        <position position="151"/>
    </location>
    <ligand>
        <name>5-phospho-alpha-D-ribose 1-diphosphate</name>
        <dbReference type="ChEBI" id="CHEBI:58017"/>
    </ligand>
</feature>
<feature type="binding site" evidence="1">
    <location>
        <position position="197"/>
    </location>
    <ligand>
        <name>anthranilate</name>
        <dbReference type="ChEBI" id="CHEBI:16567"/>
        <label>2</label>
    </ligand>
</feature>
<feature type="binding site" evidence="1">
    <location>
        <position position="256"/>
    </location>
    <ligand>
        <name>Mg(2+)</name>
        <dbReference type="ChEBI" id="CHEBI:18420"/>
        <label>2</label>
    </ligand>
</feature>
<feature type="binding site" evidence="1">
    <location>
        <position position="257"/>
    </location>
    <ligand>
        <name>Mg(2+)</name>
        <dbReference type="ChEBI" id="CHEBI:18420"/>
        <label>1</label>
    </ligand>
</feature>
<feature type="binding site" evidence="1">
    <location>
        <position position="257"/>
    </location>
    <ligand>
        <name>Mg(2+)</name>
        <dbReference type="ChEBI" id="CHEBI:18420"/>
        <label>2</label>
    </ligand>
</feature>
<dbReference type="EC" id="2.4.2.18" evidence="1"/>
<dbReference type="EMBL" id="CP000090">
    <property type="protein sequence ID" value="AAZ62385.1"/>
    <property type="molecule type" value="Genomic_DNA"/>
</dbReference>
<dbReference type="SMR" id="Q46WU8"/>
<dbReference type="STRING" id="264198.Reut_A3025"/>
<dbReference type="KEGG" id="reu:Reut_A3025"/>
<dbReference type="eggNOG" id="COG0547">
    <property type="taxonomic scope" value="Bacteria"/>
</dbReference>
<dbReference type="HOGENOM" id="CLU_034315_2_1_4"/>
<dbReference type="UniPathway" id="UPA00035">
    <property type="reaction ID" value="UER00041"/>
</dbReference>
<dbReference type="GO" id="GO:0005829">
    <property type="term" value="C:cytosol"/>
    <property type="evidence" value="ECO:0007669"/>
    <property type="project" value="TreeGrafter"/>
</dbReference>
<dbReference type="GO" id="GO:0004048">
    <property type="term" value="F:anthranilate phosphoribosyltransferase activity"/>
    <property type="evidence" value="ECO:0007669"/>
    <property type="project" value="UniProtKB-UniRule"/>
</dbReference>
<dbReference type="GO" id="GO:0000287">
    <property type="term" value="F:magnesium ion binding"/>
    <property type="evidence" value="ECO:0007669"/>
    <property type="project" value="UniProtKB-UniRule"/>
</dbReference>
<dbReference type="GO" id="GO:0000162">
    <property type="term" value="P:L-tryptophan biosynthetic process"/>
    <property type="evidence" value="ECO:0007669"/>
    <property type="project" value="UniProtKB-UniRule"/>
</dbReference>
<dbReference type="FunFam" id="3.40.1030.10:FF:000002">
    <property type="entry name" value="Anthranilate phosphoribosyltransferase"/>
    <property type="match status" value="1"/>
</dbReference>
<dbReference type="Gene3D" id="3.40.1030.10">
    <property type="entry name" value="Nucleoside phosphorylase/phosphoribosyltransferase catalytic domain"/>
    <property type="match status" value="1"/>
</dbReference>
<dbReference type="Gene3D" id="1.20.970.10">
    <property type="entry name" value="Transferase, Pyrimidine Nucleoside Phosphorylase, Chain C"/>
    <property type="match status" value="1"/>
</dbReference>
<dbReference type="HAMAP" id="MF_00211">
    <property type="entry name" value="TrpD"/>
    <property type="match status" value="1"/>
</dbReference>
<dbReference type="InterPro" id="IPR005940">
    <property type="entry name" value="Anthranilate_Pribosyl_Tfrase"/>
</dbReference>
<dbReference type="InterPro" id="IPR000312">
    <property type="entry name" value="Glycosyl_Trfase_fam3"/>
</dbReference>
<dbReference type="InterPro" id="IPR017459">
    <property type="entry name" value="Glycosyl_Trfase_fam3_N_dom"/>
</dbReference>
<dbReference type="InterPro" id="IPR036320">
    <property type="entry name" value="Glycosyl_Trfase_fam3_N_dom_sf"/>
</dbReference>
<dbReference type="InterPro" id="IPR035902">
    <property type="entry name" value="Nuc_phospho_transferase"/>
</dbReference>
<dbReference type="NCBIfam" id="TIGR01245">
    <property type="entry name" value="trpD"/>
    <property type="match status" value="1"/>
</dbReference>
<dbReference type="PANTHER" id="PTHR43285">
    <property type="entry name" value="ANTHRANILATE PHOSPHORIBOSYLTRANSFERASE"/>
    <property type="match status" value="1"/>
</dbReference>
<dbReference type="PANTHER" id="PTHR43285:SF2">
    <property type="entry name" value="ANTHRANILATE PHOSPHORIBOSYLTRANSFERASE"/>
    <property type="match status" value="1"/>
</dbReference>
<dbReference type="Pfam" id="PF02885">
    <property type="entry name" value="Glycos_trans_3N"/>
    <property type="match status" value="1"/>
</dbReference>
<dbReference type="Pfam" id="PF00591">
    <property type="entry name" value="Glycos_transf_3"/>
    <property type="match status" value="1"/>
</dbReference>
<dbReference type="SUPFAM" id="SSF52418">
    <property type="entry name" value="Nucleoside phosphorylase/phosphoribosyltransferase catalytic domain"/>
    <property type="match status" value="1"/>
</dbReference>
<dbReference type="SUPFAM" id="SSF47648">
    <property type="entry name" value="Nucleoside phosphorylase/phosphoribosyltransferase N-terminal domain"/>
    <property type="match status" value="1"/>
</dbReference>
<comment type="function">
    <text evidence="1">Catalyzes the transfer of the phosphoribosyl group of 5-phosphorylribose-1-pyrophosphate (PRPP) to anthranilate to yield N-(5'-phosphoribosyl)-anthranilate (PRA).</text>
</comment>
<comment type="catalytic activity">
    <reaction evidence="1">
        <text>N-(5-phospho-beta-D-ribosyl)anthranilate + diphosphate = 5-phospho-alpha-D-ribose 1-diphosphate + anthranilate</text>
        <dbReference type="Rhea" id="RHEA:11768"/>
        <dbReference type="ChEBI" id="CHEBI:16567"/>
        <dbReference type="ChEBI" id="CHEBI:18277"/>
        <dbReference type="ChEBI" id="CHEBI:33019"/>
        <dbReference type="ChEBI" id="CHEBI:58017"/>
        <dbReference type="EC" id="2.4.2.18"/>
    </reaction>
</comment>
<comment type="cofactor">
    <cofactor evidence="1">
        <name>Mg(2+)</name>
        <dbReference type="ChEBI" id="CHEBI:18420"/>
    </cofactor>
    <text evidence="1">Binds 2 magnesium ions per monomer.</text>
</comment>
<comment type="pathway">
    <text evidence="1">Amino-acid biosynthesis; L-tryptophan biosynthesis; L-tryptophan from chorismate: step 2/5.</text>
</comment>
<comment type="subunit">
    <text evidence="1">Homodimer.</text>
</comment>
<comment type="similarity">
    <text evidence="1">Belongs to the anthranilate phosphoribosyltransferase family.</text>
</comment>
<keyword id="KW-0028">Amino-acid biosynthesis</keyword>
<keyword id="KW-0057">Aromatic amino acid biosynthesis</keyword>
<keyword id="KW-0328">Glycosyltransferase</keyword>
<keyword id="KW-0460">Magnesium</keyword>
<keyword id="KW-0479">Metal-binding</keyword>
<keyword id="KW-0808">Transferase</keyword>
<keyword id="KW-0822">Tryptophan biosynthesis</keyword>
<gene>
    <name evidence="1" type="primary">trpD</name>
    <name type="ordered locus">Reut_A3025</name>
</gene>
<protein>
    <recommendedName>
        <fullName evidence="1">Anthranilate phosphoribosyltransferase</fullName>
        <ecNumber evidence="1">2.4.2.18</ecNumber>
    </recommendedName>
</protein>
<evidence type="ECO:0000255" key="1">
    <source>
        <dbReference type="HAMAP-Rule" id="MF_00211"/>
    </source>
</evidence>